<protein>
    <recommendedName>
        <fullName evidence="1">Pyridoxal 5'-phosphate synthase subunit PdxS</fullName>
        <shortName evidence="1">PLP synthase subunit PdxS</shortName>
        <ecNumber evidence="1">4.3.3.6</ecNumber>
    </recommendedName>
    <alternativeName>
        <fullName evidence="1">Pdx1</fullName>
    </alternativeName>
</protein>
<dbReference type="EC" id="4.3.3.6" evidence="1"/>
<dbReference type="EMBL" id="AF067149">
    <property type="protein sequence ID" value="AAC18606.1"/>
    <property type="molecule type" value="Genomic_DNA"/>
</dbReference>
<dbReference type="SMR" id="O69190"/>
<dbReference type="UniPathway" id="UPA00245"/>
<dbReference type="GO" id="GO:0036381">
    <property type="term" value="F:pyridoxal 5'-phosphate synthase (glutamine hydrolysing) activity"/>
    <property type="evidence" value="ECO:0007669"/>
    <property type="project" value="UniProtKB-EC"/>
</dbReference>
<dbReference type="GO" id="GO:0006520">
    <property type="term" value="P:amino acid metabolic process"/>
    <property type="evidence" value="ECO:0007669"/>
    <property type="project" value="TreeGrafter"/>
</dbReference>
<dbReference type="GO" id="GO:0042823">
    <property type="term" value="P:pyridoxal phosphate biosynthetic process"/>
    <property type="evidence" value="ECO:0007669"/>
    <property type="project" value="UniProtKB-UniPathway"/>
</dbReference>
<dbReference type="GO" id="GO:0008615">
    <property type="term" value="P:pyridoxine biosynthetic process"/>
    <property type="evidence" value="ECO:0007669"/>
    <property type="project" value="TreeGrafter"/>
</dbReference>
<dbReference type="FunFam" id="3.20.20.70:FF:000001">
    <property type="entry name" value="Pyridoxine biosynthesis protein PDX1"/>
    <property type="match status" value="1"/>
</dbReference>
<dbReference type="Gene3D" id="3.20.20.70">
    <property type="entry name" value="Aldolase class I"/>
    <property type="match status" value="1"/>
</dbReference>
<dbReference type="InterPro" id="IPR013785">
    <property type="entry name" value="Aldolase_TIM"/>
</dbReference>
<dbReference type="InterPro" id="IPR001852">
    <property type="entry name" value="PdxS/SNZ"/>
</dbReference>
<dbReference type="InterPro" id="IPR033755">
    <property type="entry name" value="PdxS/SNZ_N"/>
</dbReference>
<dbReference type="InterPro" id="IPR011060">
    <property type="entry name" value="RibuloseP-bd_barrel"/>
</dbReference>
<dbReference type="NCBIfam" id="NF003215">
    <property type="entry name" value="PRK04180.1"/>
    <property type="match status" value="1"/>
</dbReference>
<dbReference type="PANTHER" id="PTHR31829">
    <property type="entry name" value="PYRIDOXAL 5'-PHOSPHATE SYNTHASE SUBUNIT SNZ1-RELATED"/>
    <property type="match status" value="1"/>
</dbReference>
<dbReference type="PANTHER" id="PTHR31829:SF0">
    <property type="entry name" value="PYRIDOXAL 5'-PHOSPHATE SYNTHASE SUBUNIT SNZ1-RELATED"/>
    <property type="match status" value="1"/>
</dbReference>
<dbReference type="Pfam" id="PF01680">
    <property type="entry name" value="SOR_SNZ"/>
    <property type="match status" value="1"/>
</dbReference>
<dbReference type="SUPFAM" id="SSF51366">
    <property type="entry name" value="Ribulose-phoshate binding barrel"/>
    <property type="match status" value="1"/>
</dbReference>
<dbReference type="PROSITE" id="PS01235">
    <property type="entry name" value="PDXS_SNZ_1"/>
    <property type="match status" value="1"/>
</dbReference>
<dbReference type="PROSITE" id="PS51129">
    <property type="entry name" value="PDXS_SNZ_2"/>
    <property type="match status" value="1"/>
</dbReference>
<gene>
    <name evidence="1" type="primary">pdxS</name>
</gene>
<accession>O69190</accession>
<sequence length="239" mass="25430">MSDINIKIGLAEMLKGGVIMDVVNAEQAEIAQQAGAVAVMALERVPADIRKDGGIARMSDPKLIKEIMSVVSIPVMAKARIGHFVEAQILESLGVDFIDESEVLTPADELNHIDKDSFKVPFVCGCTNLGEALRRIGEGAALIRTKGEAGTGNIVEAVRQLRQVNKDINYIKNADKSELMAIAKNLQAPYDLVTYVHKNGKLPVPNFSAGGVATPADAALMMQLGAESVFVGSGIFKSA</sequence>
<reference key="1">
    <citation type="submission" date="1998-05" db="EMBL/GenBank/DDBJ databases">
        <authorList>
            <person name="Pomerantsev A.P."/>
            <person name="Obuchi M."/>
            <person name="Odagiri T."/>
            <person name="Ohara Y."/>
        </authorList>
    </citation>
    <scope>NUCLEOTIDE SEQUENCE [GENOMIC DNA]</scope>
    <source>
        <strain>Ebina</strain>
    </source>
</reference>
<proteinExistence type="inferred from homology"/>
<evidence type="ECO:0000255" key="1">
    <source>
        <dbReference type="HAMAP-Rule" id="MF_01824"/>
    </source>
</evidence>
<comment type="function">
    <text evidence="1">Catalyzes the formation of pyridoxal 5'-phosphate from ribose 5-phosphate (RBP), glyceraldehyde 3-phosphate (G3P) and ammonia. The ammonia is provided by the PdxT subunit. Can also use ribulose 5-phosphate and dihydroxyacetone phosphate as substrates, resulting from enzyme-catalyzed isomerization of RBP and G3P, respectively.</text>
</comment>
<comment type="catalytic activity">
    <reaction evidence="1">
        <text>aldehydo-D-ribose 5-phosphate + D-glyceraldehyde 3-phosphate + L-glutamine = pyridoxal 5'-phosphate + L-glutamate + phosphate + 3 H2O + H(+)</text>
        <dbReference type="Rhea" id="RHEA:31507"/>
        <dbReference type="ChEBI" id="CHEBI:15377"/>
        <dbReference type="ChEBI" id="CHEBI:15378"/>
        <dbReference type="ChEBI" id="CHEBI:29985"/>
        <dbReference type="ChEBI" id="CHEBI:43474"/>
        <dbReference type="ChEBI" id="CHEBI:58273"/>
        <dbReference type="ChEBI" id="CHEBI:58359"/>
        <dbReference type="ChEBI" id="CHEBI:59776"/>
        <dbReference type="ChEBI" id="CHEBI:597326"/>
        <dbReference type="EC" id="4.3.3.6"/>
    </reaction>
</comment>
<comment type="pathway">
    <text evidence="1">Cofactor biosynthesis; pyridoxal 5'-phosphate biosynthesis.</text>
</comment>
<comment type="subunit">
    <text evidence="1">In the presence of PdxT, forms a dodecamer of heterodimers.</text>
</comment>
<comment type="similarity">
    <text evidence="1">Belongs to the PdxS/SNZ family.</text>
</comment>
<name>PDXS_FRATU</name>
<feature type="chain" id="PRO_0000109393" description="Pyridoxal 5'-phosphate synthase subunit PdxS">
    <location>
        <begin position="1"/>
        <end position="239" status="greater than"/>
    </location>
</feature>
<feature type="active site" description="Schiff-base intermediate with D-ribose 5-phosphate" evidence="1">
    <location>
        <position position="78"/>
    </location>
</feature>
<feature type="binding site" evidence="1">
    <location>
        <position position="21"/>
    </location>
    <ligand>
        <name>D-ribose 5-phosphate</name>
        <dbReference type="ChEBI" id="CHEBI:78346"/>
    </ligand>
</feature>
<feature type="binding site" evidence="1">
    <location>
        <position position="150"/>
    </location>
    <ligand>
        <name>D-ribose 5-phosphate</name>
        <dbReference type="ChEBI" id="CHEBI:78346"/>
    </ligand>
</feature>
<feature type="binding site" evidence="1">
    <location>
        <position position="162"/>
    </location>
    <ligand>
        <name>D-glyceraldehyde 3-phosphate</name>
        <dbReference type="ChEBI" id="CHEBI:59776"/>
    </ligand>
</feature>
<feature type="binding site" evidence="1">
    <location>
        <position position="211"/>
    </location>
    <ligand>
        <name>D-ribose 5-phosphate</name>
        <dbReference type="ChEBI" id="CHEBI:78346"/>
    </ligand>
</feature>
<feature type="binding site" evidence="1">
    <location>
        <begin position="232"/>
        <end position="233"/>
    </location>
    <ligand>
        <name>D-ribose 5-phosphate</name>
        <dbReference type="ChEBI" id="CHEBI:78346"/>
    </ligand>
</feature>
<feature type="non-terminal residue">
    <location>
        <position position="239"/>
    </location>
</feature>
<organism>
    <name type="scientific">Francisella tularensis</name>
    <dbReference type="NCBI Taxonomy" id="263"/>
    <lineage>
        <taxon>Bacteria</taxon>
        <taxon>Pseudomonadati</taxon>
        <taxon>Pseudomonadota</taxon>
        <taxon>Gammaproteobacteria</taxon>
        <taxon>Thiotrichales</taxon>
        <taxon>Francisellaceae</taxon>
        <taxon>Francisella</taxon>
    </lineage>
</organism>
<keyword id="KW-0456">Lyase</keyword>
<keyword id="KW-0663">Pyridoxal phosphate</keyword>
<keyword id="KW-0704">Schiff base</keyword>